<proteinExistence type="evidence at protein level"/>
<sequence>MDADSLLLSLELASGSGQGLSPDRRASLLTSLMLVKRDYRYDRVLFWGRILGLVADYYIAQGLSEDQLAPRKTLYSLNCTEWSLLPPATEEMVAQSSVVKGRFMGDPSYEYEHTELQKVNEGEKVFEEEIVVQIKEETRLVSVIDQIDKAVAIIPRGALFKTPFGPTHVNRTFEGLSLSEAKKLSSYFHFREPVELKNKTLLEKADLDPSLDFMDSLEHDIPKGSWSIQMERGNALVVLRSLLWPGLTFYHAPRTKNYGYVYVGTGEKNMDLPFML</sequence>
<accession>Q9H1X1</accession>
<accession>A8K5T4</accession>
<accession>Q96NH9</accession>
<comment type="function">
    <text evidence="1 2 4">Functions as part of axonemal radial spoke complexes that play an important part in the motility of sperm and cilia (PubMed:19200523). Essential for both the radial spoke head assembly and the central pair microtubule stability in ependymal motile cilia (By similarity). Required for motility of olfactory and neural cilia and for the structural integrity of ciliary axonemes in both 9+0 and 9+2 motile cilia (By similarity).</text>
</comment>
<comment type="subunit">
    <text evidence="2 5">Component of the axonemal radial spoke 1 (RS1) and 2 (RS2) complexes, at least composed of spoke head proteins RSPH1, RSPH3, RSPH9 and the cilia-specific component RSPH4A or sperm-specific component RSPH6A, spoke stalk proteins RSPH14, DNAJB13, DYDC1, ROPN1L and NME5, and the RS1 complex-specific anchor protein IQUB (By similarity). Interacts with IQUB (By similarity). Interacts with RSPH3B (By similarity). Interacts with RSPH4A (By similarity). Interacts with RSPH6A (By similarity). Interacts with CFAP61 (By similarity). Interacts with LRRC23 (PubMed:38091523).</text>
</comment>
<comment type="interaction">
    <interactant intactId="EBI-10305303">
        <id>Q9H1X1</id>
    </interactant>
    <interactant intactId="EBI-740641">
        <id>Q9NP66</id>
        <label>HMG20A</label>
    </interactant>
    <organismsDiffer>false</organismsDiffer>
    <experiments>3</experiments>
</comment>
<comment type="interaction">
    <interactant intactId="EBI-10305303">
        <id>Q9H1X1</id>
    </interactant>
    <interactant intactId="EBI-2513996">
        <id>Q86WA8</id>
        <label>LONP2</label>
    </interactant>
    <organismsDiffer>false</organismsDiffer>
    <experiments>4</experiments>
</comment>
<comment type="interaction">
    <interactant intactId="EBI-10305303">
        <id>Q9H1X1</id>
    </interactant>
    <interactant intactId="EBI-302345">
        <id>Q8ND90</id>
        <label>PNMA1</label>
    </interactant>
    <organismsDiffer>false</organismsDiffer>
    <experiments>3</experiments>
</comment>
<comment type="subcellular location">
    <subcellularLocation>
        <location evidence="2">Cytoplasm</location>
        <location evidence="2">Cytoskeleton</location>
        <location evidence="2">Cilium axoneme</location>
    </subcellularLocation>
    <subcellularLocation>
        <location evidence="2">Cytoplasm</location>
        <location evidence="2">Cytoskeleton</location>
        <location evidence="2">Flagellum axoneme</location>
    </subcellularLocation>
    <subcellularLocation>
        <location evidence="1">Cell projection</location>
        <location evidence="1">Kinocilium</location>
    </subcellularLocation>
</comment>
<comment type="alternative products">
    <event type="alternative splicing"/>
    <isoform>
        <id>Q9H1X1-1</id>
        <name>1</name>
        <sequence type="displayed"/>
    </isoform>
    <isoform>
        <id>Q9H1X1-2</id>
        <name>2</name>
        <sequence type="described" ref="VSP_042934 VSP_042935"/>
    </isoform>
</comment>
<comment type="disease" evidence="4">
    <disease id="DI-02200">
        <name>Ciliary dyskinesia, primary, 12</name>
        <acronym>CILD12</acronym>
        <description>A disorder characterized by abnormalities of motile cilia. Respiratory infections leading to chronic inflammation and bronchiectasis are recurrent, due to defects in the respiratory cilia; reduced fertility is often observed in male patients due to abnormalities of sperm tails. Half of the patients exhibit situs inversus, due to dysfunction of monocilia at the embryonic node and randomization of left-right body asymmetry. Primary ciliary dyskinesia associated with situs inversus is referred to as Kartagener syndrome.</description>
        <dbReference type="MIM" id="612650"/>
    </disease>
    <text>The disease is caused by variants affecting the gene represented in this entry.</text>
</comment>
<comment type="similarity">
    <text evidence="7">Belongs to the flagellar radial spoke RSP9 family.</text>
</comment>
<gene>
    <name type="primary">RSPH9</name>
    <name type="synonym">C6orf206</name>
    <name type="synonym">MRPS18AL1</name>
</gene>
<keyword id="KW-0002">3D-structure</keyword>
<keyword id="KW-0025">Alternative splicing</keyword>
<keyword id="KW-0966">Cell projection</keyword>
<keyword id="KW-1186">Ciliopathy</keyword>
<keyword id="KW-0969">Cilium</keyword>
<keyword id="KW-0970">Cilium biogenesis/degradation</keyword>
<keyword id="KW-0963">Cytoplasm</keyword>
<keyword id="KW-0206">Cytoskeleton</keyword>
<keyword id="KW-0225">Disease variant</keyword>
<keyword id="KW-0282">Flagellum</keyword>
<keyword id="KW-1012">Kartagener syndrome</keyword>
<keyword id="KW-0990">Primary ciliary dyskinesia</keyword>
<keyword id="KW-1267">Proteomics identification</keyword>
<keyword id="KW-1185">Reference proteome</keyword>
<dbReference type="EMBL" id="AK055407">
    <property type="protein sequence ID" value="BAB70918.1"/>
    <property type="molecule type" value="mRNA"/>
</dbReference>
<dbReference type="EMBL" id="AK291399">
    <property type="protein sequence ID" value="BAF84088.1"/>
    <property type="molecule type" value="mRNA"/>
</dbReference>
<dbReference type="EMBL" id="AL136131">
    <property type="status" value="NOT_ANNOTATED_CDS"/>
    <property type="molecule type" value="Genomic_DNA"/>
</dbReference>
<dbReference type="EMBL" id="CH471081">
    <property type="protein sequence ID" value="EAX04222.1"/>
    <property type="molecule type" value="Genomic_DNA"/>
</dbReference>
<dbReference type="EMBL" id="BC029519">
    <property type="protein sequence ID" value="AAH29519.1"/>
    <property type="molecule type" value="mRNA"/>
</dbReference>
<dbReference type="CCDS" id="CCDS4905.1">
    <molecule id="Q9H1X1-1"/>
</dbReference>
<dbReference type="CCDS" id="CCDS55005.1">
    <molecule id="Q9H1X1-2"/>
</dbReference>
<dbReference type="RefSeq" id="NP_001180270.1">
    <molecule id="Q9H1X1-2"/>
    <property type="nucleotide sequence ID" value="NM_001193341.2"/>
</dbReference>
<dbReference type="RefSeq" id="NP_689945.2">
    <molecule id="Q9H1X1-1"/>
    <property type="nucleotide sequence ID" value="NM_152732.4"/>
</dbReference>
<dbReference type="PDB" id="8J07">
    <property type="method" value="EM"/>
    <property type="resolution" value="4.10 A"/>
    <property type="chains" value="M/N/O/P/m/n/o/p=1-276"/>
</dbReference>
<dbReference type="PDBsum" id="8J07"/>
<dbReference type="EMDB" id="EMD-35888"/>
<dbReference type="SMR" id="Q9H1X1"/>
<dbReference type="BioGRID" id="128723">
    <property type="interactions" value="18"/>
</dbReference>
<dbReference type="ComplexPortal" id="CPX-8163">
    <property type="entry name" value="Radial spoke complex, ciliiar variant"/>
</dbReference>
<dbReference type="ComplexPortal" id="CPX-8164">
    <property type="entry name" value="Radial spoke complex, flagellar variant"/>
</dbReference>
<dbReference type="FunCoup" id="Q9H1X1">
    <property type="interactions" value="78"/>
</dbReference>
<dbReference type="IntAct" id="Q9H1X1">
    <property type="interactions" value="15"/>
</dbReference>
<dbReference type="MINT" id="Q9H1X1"/>
<dbReference type="STRING" id="9606.ENSP00000361238"/>
<dbReference type="GlyGen" id="Q9H1X1">
    <property type="glycosylation" value="1 site, 1 O-linked glycan (1 site)"/>
</dbReference>
<dbReference type="iPTMnet" id="Q9H1X1"/>
<dbReference type="PhosphoSitePlus" id="Q9H1X1"/>
<dbReference type="BioMuta" id="RSPH9"/>
<dbReference type="DMDM" id="73917724"/>
<dbReference type="MassIVE" id="Q9H1X1"/>
<dbReference type="PaxDb" id="9606-ENSP00000361238"/>
<dbReference type="PeptideAtlas" id="Q9H1X1"/>
<dbReference type="ProteomicsDB" id="80450">
    <molecule id="Q9H1X1-1"/>
</dbReference>
<dbReference type="ProteomicsDB" id="80451">
    <molecule id="Q9H1X1-2"/>
</dbReference>
<dbReference type="Antibodypedia" id="30558">
    <property type="antibodies" value="69 antibodies from 17 providers"/>
</dbReference>
<dbReference type="DNASU" id="221421"/>
<dbReference type="Ensembl" id="ENST00000372163.5">
    <molecule id="Q9H1X1-1"/>
    <property type="protein sequence ID" value="ENSP00000361236.4"/>
    <property type="gene ID" value="ENSG00000172426.16"/>
</dbReference>
<dbReference type="Ensembl" id="ENST00000372165.8">
    <molecule id="Q9H1X1-2"/>
    <property type="protein sequence ID" value="ENSP00000361238.4"/>
    <property type="gene ID" value="ENSG00000172426.16"/>
</dbReference>
<dbReference type="GeneID" id="221421"/>
<dbReference type="KEGG" id="hsa:221421"/>
<dbReference type="MANE-Select" id="ENST00000372163.5">
    <property type="protein sequence ID" value="ENSP00000361236.4"/>
    <property type="RefSeq nucleotide sequence ID" value="NM_152732.5"/>
    <property type="RefSeq protein sequence ID" value="NP_689945.2"/>
</dbReference>
<dbReference type="UCSC" id="uc003ovw.3">
    <molecule id="Q9H1X1-1"/>
    <property type="organism name" value="human"/>
</dbReference>
<dbReference type="AGR" id="HGNC:21057"/>
<dbReference type="CTD" id="221421"/>
<dbReference type="DisGeNET" id="221421"/>
<dbReference type="GeneCards" id="RSPH9"/>
<dbReference type="GeneReviews" id="RSPH9"/>
<dbReference type="HGNC" id="HGNC:21057">
    <property type="gene designation" value="RSPH9"/>
</dbReference>
<dbReference type="HPA" id="ENSG00000172426">
    <property type="expression patterns" value="Tissue enhanced (choroid plexus, fallopian tube, testis)"/>
</dbReference>
<dbReference type="MalaCards" id="RSPH9"/>
<dbReference type="MIM" id="612648">
    <property type="type" value="gene"/>
</dbReference>
<dbReference type="MIM" id="612650">
    <property type="type" value="phenotype"/>
</dbReference>
<dbReference type="neXtProt" id="NX_Q9H1X1"/>
<dbReference type="OpenTargets" id="ENSG00000172426"/>
<dbReference type="Orphanet" id="244">
    <property type="disease" value="Primary ciliary dyskinesia"/>
</dbReference>
<dbReference type="PharmGKB" id="PA164725569"/>
<dbReference type="VEuPathDB" id="HostDB:ENSG00000172426"/>
<dbReference type="GeneTree" id="ENSGT00390000018686"/>
<dbReference type="HOGENOM" id="CLU_079530_0_0_1"/>
<dbReference type="InParanoid" id="Q9H1X1"/>
<dbReference type="OMA" id="TFYHVPN"/>
<dbReference type="OrthoDB" id="10258956at2759"/>
<dbReference type="PAN-GO" id="Q9H1X1">
    <property type="GO annotations" value="4 GO annotations based on evolutionary models"/>
</dbReference>
<dbReference type="PhylomeDB" id="Q9H1X1"/>
<dbReference type="TreeFam" id="TF323644"/>
<dbReference type="PathwayCommons" id="Q9H1X1"/>
<dbReference type="SignaLink" id="Q9H1X1"/>
<dbReference type="BioGRID-ORCS" id="221421">
    <property type="hits" value="84 hits in 1145 CRISPR screens"/>
</dbReference>
<dbReference type="ChiTaRS" id="RSPH9">
    <property type="organism name" value="human"/>
</dbReference>
<dbReference type="GeneWiki" id="RSPH9"/>
<dbReference type="GenomeRNAi" id="221421"/>
<dbReference type="Pharos" id="Q9H1X1">
    <property type="development level" value="Tbio"/>
</dbReference>
<dbReference type="PRO" id="PR:Q9H1X1"/>
<dbReference type="Proteomes" id="UP000005640">
    <property type="component" value="Chromosome 6"/>
</dbReference>
<dbReference type="RNAct" id="Q9H1X1">
    <property type="molecule type" value="protein"/>
</dbReference>
<dbReference type="Bgee" id="ENSG00000172426">
    <property type="expression patterns" value="Expressed in bronchial epithelial cell and 108 other cell types or tissues"/>
</dbReference>
<dbReference type="GO" id="GO:0097729">
    <property type="term" value="C:9+2 motile cilium"/>
    <property type="evidence" value="ECO:0000314"/>
    <property type="project" value="GO_Central"/>
</dbReference>
<dbReference type="GO" id="GO:0005930">
    <property type="term" value="C:axoneme"/>
    <property type="evidence" value="ECO:0000314"/>
    <property type="project" value="GO_Central"/>
</dbReference>
<dbReference type="GO" id="GO:0060091">
    <property type="term" value="C:kinocilium"/>
    <property type="evidence" value="ECO:0007669"/>
    <property type="project" value="UniProtKB-SubCell"/>
</dbReference>
<dbReference type="GO" id="GO:0031514">
    <property type="term" value="C:motile cilium"/>
    <property type="evidence" value="ECO:0000250"/>
    <property type="project" value="UniProtKB"/>
</dbReference>
<dbReference type="GO" id="GO:0001535">
    <property type="term" value="C:radial spoke head"/>
    <property type="evidence" value="ECO:0000250"/>
    <property type="project" value="UniProtKB"/>
</dbReference>
<dbReference type="GO" id="GO:0120336">
    <property type="term" value="C:radial spoke head 1"/>
    <property type="evidence" value="ECO:0007669"/>
    <property type="project" value="Ensembl"/>
</dbReference>
<dbReference type="GO" id="GO:0120338">
    <property type="term" value="C:radial spoke head 3"/>
    <property type="evidence" value="ECO:0007669"/>
    <property type="project" value="Ensembl"/>
</dbReference>
<dbReference type="GO" id="GO:0036126">
    <property type="term" value="C:sperm flagellum"/>
    <property type="evidence" value="ECO:0000250"/>
    <property type="project" value="UniProtKB"/>
</dbReference>
<dbReference type="GO" id="GO:1904158">
    <property type="term" value="P:axonemal central apparatus assembly"/>
    <property type="evidence" value="ECO:0000250"/>
    <property type="project" value="UniProtKB"/>
</dbReference>
<dbReference type="GO" id="GO:0035082">
    <property type="term" value="P:axoneme assembly"/>
    <property type="evidence" value="ECO:0000315"/>
    <property type="project" value="BHF-UCL"/>
</dbReference>
<dbReference type="GO" id="GO:0003341">
    <property type="term" value="P:cilium movement"/>
    <property type="evidence" value="ECO:0000315"/>
    <property type="project" value="BHF-UCL"/>
</dbReference>
<dbReference type="GO" id="GO:0060294">
    <property type="term" value="P:cilium movement involved in cell motility"/>
    <property type="evidence" value="ECO:0000318"/>
    <property type="project" value="GO_Central"/>
</dbReference>
<dbReference type="GO" id="GO:0044458">
    <property type="term" value="P:motile cilium assembly"/>
    <property type="evidence" value="ECO:0000318"/>
    <property type="project" value="GO_Central"/>
</dbReference>
<dbReference type="GO" id="GO:0062177">
    <property type="term" value="P:radial spoke assembly"/>
    <property type="evidence" value="ECO:0000250"/>
    <property type="project" value="UniProtKB"/>
</dbReference>
<dbReference type="InterPro" id="IPR055316">
    <property type="entry name" value="RSP9"/>
</dbReference>
<dbReference type="PANTHER" id="PTHR22069">
    <property type="entry name" value="MITOCHONDRIAL RIBOSOMAL PROTEIN S18"/>
    <property type="match status" value="1"/>
</dbReference>
<dbReference type="PANTHER" id="PTHR22069:SF0">
    <property type="entry name" value="RADIAL SPOKE HEAD PROTEIN 9 HOMOLOG"/>
    <property type="match status" value="1"/>
</dbReference>
<protein>
    <recommendedName>
        <fullName>Radial spoke head protein 9 homolog</fullName>
    </recommendedName>
</protein>
<evidence type="ECO:0000250" key="1">
    <source>
        <dbReference type="UniProtKB" id="Q5TYW6"/>
    </source>
</evidence>
<evidence type="ECO:0000250" key="2">
    <source>
        <dbReference type="UniProtKB" id="Q9D9V4"/>
    </source>
</evidence>
<evidence type="ECO:0000269" key="3">
    <source>
    </source>
</evidence>
<evidence type="ECO:0000269" key="4">
    <source>
    </source>
</evidence>
<evidence type="ECO:0000269" key="5">
    <source>
    </source>
</evidence>
<evidence type="ECO:0000303" key="6">
    <source>
    </source>
</evidence>
<evidence type="ECO:0000305" key="7"/>
<reference key="1">
    <citation type="journal article" date="2004" name="Nat. Genet.">
        <title>Complete sequencing and characterization of 21,243 full-length human cDNAs.</title>
        <authorList>
            <person name="Ota T."/>
            <person name="Suzuki Y."/>
            <person name="Nishikawa T."/>
            <person name="Otsuki T."/>
            <person name="Sugiyama T."/>
            <person name="Irie R."/>
            <person name="Wakamatsu A."/>
            <person name="Hayashi K."/>
            <person name="Sato H."/>
            <person name="Nagai K."/>
            <person name="Kimura K."/>
            <person name="Makita H."/>
            <person name="Sekine M."/>
            <person name="Obayashi M."/>
            <person name="Nishi T."/>
            <person name="Shibahara T."/>
            <person name="Tanaka T."/>
            <person name="Ishii S."/>
            <person name="Yamamoto J."/>
            <person name="Saito K."/>
            <person name="Kawai Y."/>
            <person name="Isono Y."/>
            <person name="Nakamura Y."/>
            <person name="Nagahari K."/>
            <person name="Murakami K."/>
            <person name="Yasuda T."/>
            <person name="Iwayanagi T."/>
            <person name="Wagatsuma M."/>
            <person name="Shiratori A."/>
            <person name="Sudo H."/>
            <person name="Hosoiri T."/>
            <person name="Kaku Y."/>
            <person name="Kodaira H."/>
            <person name="Kondo H."/>
            <person name="Sugawara M."/>
            <person name="Takahashi M."/>
            <person name="Kanda K."/>
            <person name="Yokoi T."/>
            <person name="Furuya T."/>
            <person name="Kikkawa E."/>
            <person name="Omura Y."/>
            <person name="Abe K."/>
            <person name="Kamihara K."/>
            <person name="Katsuta N."/>
            <person name="Sato K."/>
            <person name="Tanikawa M."/>
            <person name="Yamazaki M."/>
            <person name="Ninomiya K."/>
            <person name="Ishibashi T."/>
            <person name="Yamashita H."/>
            <person name="Murakawa K."/>
            <person name="Fujimori K."/>
            <person name="Tanai H."/>
            <person name="Kimata M."/>
            <person name="Watanabe M."/>
            <person name="Hiraoka S."/>
            <person name="Chiba Y."/>
            <person name="Ishida S."/>
            <person name="Ono Y."/>
            <person name="Takiguchi S."/>
            <person name="Watanabe S."/>
            <person name="Yosida M."/>
            <person name="Hotuta T."/>
            <person name="Kusano J."/>
            <person name="Kanehori K."/>
            <person name="Takahashi-Fujii A."/>
            <person name="Hara H."/>
            <person name="Tanase T.-O."/>
            <person name="Nomura Y."/>
            <person name="Togiya S."/>
            <person name="Komai F."/>
            <person name="Hara R."/>
            <person name="Takeuchi K."/>
            <person name="Arita M."/>
            <person name="Imose N."/>
            <person name="Musashino K."/>
            <person name="Yuuki H."/>
            <person name="Oshima A."/>
            <person name="Sasaki N."/>
            <person name="Aotsuka S."/>
            <person name="Yoshikawa Y."/>
            <person name="Matsunawa H."/>
            <person name="Ichihara T."/>
            <person name="Shiohata N."/>
            <person name="Sano S."/>
            <person name="Moriya S."/>
            <person name="Momiyama H."/>
            <person name="Satoh N."/>
            <person name="Takami S."/>
            <person name="Terashima Y."/>
            <person name="Suzuki O."/>
            <person name="Nakagawa S."/>
            <person name="Senoh A."/>
            <person name="Mizoguchi H."/>
            <person name="Goto Y."/>
            <person name="Shimizu F."/>
            <person name="Wakebe H."/>
            <person name="Hishigaki H."/>
            <person name="Watanabe T."/>
            <person name="Sugiyama A."/>
            <person name="Takemoto M."/>
            <person name="Kawakami B."/>
            <person name="Yamazaki M."/>
            <person name="Watanabe K."/>
            <person name="Kumagai A."/>
            <person name="Itakura S."/>
            <person name="Fukuzumi Y."/>
            <person name="Fujimori Y."/>
            <person name="Komiyama M."/>
            <person name="Tashiro H."/>
            <person name="Tanigami A."/>
            <person name="Fujiwara T."/>
            <person name="Ono T."/>
            <person name="Yamada K."/>
            <person name="Fujii Y."/>
            <person name="Ozaki K."/>
            <person name="Hirao M."/>
            <person name="Ohmori Y."/>
            <person name="Kawabata A."/>
            <person name="Hikiji T."/>
            <person name="Kobatake N."/>
            <person name="Inagaki H."/>
            <person name="Ikema Y."/>
            <person name="Okamoto S."/>
            <person name="Okitani R."/>
            <person name="Kawakami T."/>
            <person name="Noguchi S."/>
            <person name="Itoh T."/>
            <person name="Shigeta K."/>
            <person name="Senba T."/>
            <person name="Matsumura K."/>
            <person name="Nakajima Y."/>
            <person name="Mizuno T."/>
            <person name="Morinaga M."/>
            <person name="Sasaki M."/>
            <person name="Togashi T."/>
            <person name="Oyama M."/>
            <person name="Hata H."/>
            <person name="Watanabe M."/>
            <person name="Komatsu T."/>
            <person name="Mizushima-Sugano J."/>
            <person name="Satoh T."/>
            <person name="Shirai Y."/>
            <person name="Takahashi Y."/>
            <person name="Nakagawa K."/>
            <person name="Okumura K."/>
            <person name="Nagase T."/>
            <person name="Nomura N."/>
            <person name="Kikuchi H."/>
            <person name="Masuho Y."/>
            <person name="Yamashita R."/>
            <person name="Nakai K."/>
            <person name="Yada T."/>
            <person name="Nakamura Y."/>
            <person name="Ohara O."/>
            <person name="Isogai T."/>
            <person name="Sugano S."/>
        </authorList>
    </citation>
    <scope>NUCLEOTIDE SEQUENCE [LARGE SCALE MRNA] (ISOFORMS 1 AND 2)</scope>
    <scope>VARIANT ILE-261</scope>
    <source>
        <tissue>Brain</tissue>
    </source>
</reference>
<reference key="2">
    <citation type="journal article" date="2003" name="Nature">
        <title>The DNA sequence and analysis of human chromosome 6.</title>
        <authorList>
            <person name="Mungall A.J."/>
            <person name="Palmer S.A."/>
            <person name="Sims S.K."/>
            <person name="Edwards C.A."/>
            <person name="Ashurst J.L."/>
            <person name="Wilming L."/>
            <person name="Jones M.C."/>
            <person name="Horton R."/>
            <person name="Hunt S.E."/>
            <person name="Scott C.E."/>
            <person name="Gilbert J.G.R."/>
            <person name="Clamp M.E."/>
            <person name="Bethel G."/>
            <person name="Milne S."/>
            <person name="Ainscough R."/>
            <person name="Almeida J.P."/>
            <person name="Ambrose K.D."/>
            <person name="Andrews T.D."/>
            <person name="Ashwell R.I.S."/>
            <person name="Babbage A.K."/>
            <person name="Bagguley C.L."/>
            <person name="Bailey J."/>
            <person name="Banerjee R."/>
            <person name="Barker D.J."/>
            <person name="Barlow K.F."/>
            <person name="Bates K."/>
            <person name="Beare D.M."/>
            <person name="Beasley H."/>
            <person name="Beasley O."/>
            <person name="Bird C.P."/>
            <person name="Blakey S.E."/>
            <person name="Bray-Allen S."/>
            <person name="Brook J."/>
            <person name="Brown A.J."/>
            <person name="Brown J.Y."/>
            <person name="Burford D.C."/>
            <person name="Burrill W."/>
            <person name="Burton J."/>
            <person name="Carder C."/>
            <person name="Carter N.P."/>
            <person name="Chapman J.C."/>
            <person name="Clark S.Y."/>
            <person name="Clark G."/>
            <person name="Clee C.M."/>
            <person name="Clegg S."/>
            <person name="Cobley V."/>
            <person name="Collier R.E."/>
            <person name="Collins J.E."/>
            <person name="Colman L.K."/>
            <person name="Corby N.R."/>
            <person name="Coville G.J."/>
            <person name="Culley K.M."/>
            <person name="Dhami P."/>
            <person name="Davies J."/>
            <person name="Dunn M."/>
            <person name="Earthrowl M.E."/>
            <person name="Ellington A.E."/>
            <person name="Evans K.A."/>
            <person name="Faulkner L."/>
            <person name="Francis M.D."/>
            <person name="Frankish A."/>
            <person name="Frankland J."/>
            <person name="French L."/>
            <person name="Garner P."/>
            <person name="Garnett J."/>
            <person name="Ghori M.J."/>
            <person name="Gilby L.M."/>
            <person name="Gillson C.J."/>
            <person name="Glithero R.J."/>
            <person name="Grafham D.V."/>
            <person name="Grant M."/>
            <person name="Gribble S."/>
            <person name="Griffiths C."/>
            <person name="Griffiths M.N.D."/>
            <person name="Hall R."/>
            <person name="Halls K.S."/>
            <person name="Hammond S."/>
            <person name="Harley J.L."/>
            <person name="Hart E.A."/>
            <person name="Heath P.D."/>
            <person name="Heathcott R."/>
            <person name="Holmes S.J."/>
            <person name="Howden P.J."/>
            <person name="Howe K.L."/>
            <person name="Howell G.R."/>
            <person name="Huckle E."/>
            <person name="Humphray S.J."/>
            <person name="Humphries M.D."/>
            <person name="Hunt A.R."/>
            <person name="Johnson C.M."/>
            <person name="Joy A.A."/>
            <person name="Kay M."/>
            <person name="Keenan S.J."/>
            <person name="Kimberley A.M."/>
            <person name="King A."/>
            <person name="Laird G.K."/>
            <person name="Langford C."/>
            <person name="Lawlor S."/>
            <person name="Leongamornlert D.A."/>
            <person name="Leversha M."/>
            <person name="Lloyd C.R."/>
            <person name="Lloyd D.M."/>
            <person name="Loveland J.E."/>
            <person name="Lovell J."/>
            <person name="Martin S."/>
            <person name="Mashreghi-Mohammadi M."/>
            <person name="Maslen G.L."/>
            <person name="Matthews L."/>
            <person name="McCann O.T."/>
            <person name="McLaren S.J."/>
            <person name="McLay K."/>
            <person name="McMurray A."/>
            <person name="Moore M.J.F."/>
            <person name="Mullikin J.C."/>
            <person name="Niblett D."/>
            <person name="Nickerson T."/>
            <person name="Novik K.L."/>
            <person name="Oliver K."/>
            <person name="Overton-Larty E.K."/>
            <person name="Parker A."/>
            <person name="Patel R."/>
            <person name="Pearce A.V."/>
            <person name="Peck A.I."/>
            <person name="Phillimore B.J.C.T."/>
            <person name="Phillips S."/>
            <person name="Plumb R.W."/>
            <person name="Porter K.M."/>
            <person name="Ramsey Y."/>
            <person name="Ranby S.A."/>
            <person name="Rice C.M."/>
            <person name="Ross M.T."/>
            <person name="Searle S.M."/>
            <person name="Sehra H.K."/>
            <person name="Sheridan E."/>
            <person name="Skuce C.D."/>
            <person name="Smith S."/>
            <person name="Smith M."/>
            <person name="Spraggon L."/>
            <person name="Squares S.L."/>
            <person name="Steward C.A."/>
            <person name="Sycamore N."/>
            <person name="Tamlyn-Hall G."/>
            <person name="Tester J."/>
            <person name="Theaker A.J."/>
            <person name="Thomas D.W."/>
            <person name="Thorpe A."/>
            <person name="Tracey A."/>
            <person name="Tromans A."/>
            <person name="Tubby B."/>
            <person name="Wall M."/>
            <person name="Wallis J.M."/>
            <person name="West A.P."/>
            <person name="White S.S."/>
            <person name="Whitehead S.L."/>
            <person name="Whittaker H."/>
            <person name="Wild A."/>
            <person name="Willey D.J."/>
            <person name="Wilmer T.E."/>
            <person name="Wood J.M."/>
            <person name="Wray P.W."/>
            <person name="Wyatt J.C."/>
            <person name="Young L."/>
            <person name="Younger R.M."/>
            <person name="Bentley D.R."/>
            <person name="Coulson A."/>
            <person name="Durbin R.M."/>
            <person name="Hubbard T."/>
            <person name="Sulston J.E."/>
            <person name="Dunham I."/>
            <person name="Rogers J."/>
            <person name="Beck S."/>
        </authorList>
    </citation>
    <scope>NUCLEOTIDE SEQUENCE [LARGE SCALE GENOMIC DNA]</scope>
</reference>
<reference key="3">
    <citation type="submission" date="2005-07" db="EMBL/GenBank/DDBJ databases">
        <authorList>
            <person name="Mural R.J."/>
            <person name="Istrail S."/>
            <person name="Sutton G."/>
            <person name="Florea L."/>
            <person name="Halpern A.L."/>
            <person name="Mobarry C.M."/>
            <person name="Lippert R."/>
            <person name="Walenz B."/>
            <person name="Shatkay H."/>
            <person name="Dew I."/>
            <person name="Miller J.R."/>
            <person name="Flanigan M.J."/>
            <person name="Edwards N.J."/>
            <person name="Bolanos R."/>
            <person name="Fasulo D."/>
            <person name="Halldorsson B.V."/>
            <person name="Hannenhalli S."/>
            <person name="Turner R."/>
            <person name="Yooseph S."/>
            <person name="Lu F."/>
            <person name="Nusskern D.R."/>
            <person name="Shue B.C."/>
            <person name="Zheng X.H."/>
            <person name="Zhong F."/>
            <person name="Delcher A.L."/>
            <person name="Huson D.H."/>
            <person name="Kravitz S.A."/>
            <person name="Mouchard L."/>
            <person name="Reinert K."/>
            <person name="Remington K.A."/>
            <person name="Clark A.G."/>
            <person name="Waterman M.S."/>
            <person name="Eichler E.E."/>
            <person name="Adams M.D."/>
            <person name="Hunkapiller M.W."/>
            <person name="Myers E.W."/>
            <person name="Venter J.C."/>
        </authorList>
    </citation>
    <scope>NUCLEOTIDE SEQUENCE [LARGE SCALE GENOMIC DNA]</scope>
</reference>
<reference key="4">
    <citation type="journal article" date="2004" name="Genome Res.">
        <title>The status, quality, and expansion of the NIH full-length cDNA project: the Mammalian Gene Collection (MGC).</title>
        <authorList>
            <consortium name="The MGC Project Team"/>
        </authorList>
    </citation>
    <scope>NUCLEOTIDE SEQUENCE [LARGE SCALE MRNA] (ISOFORM 1)</scope>
    <source>
        <tissue>Testis</tissue>
    </source>
</reference>
<reference key="5">
    <citation type="journal article" date="2009" name="Am. J. Hum. Genet.">
        <title>Mutations in radial spoke head protein genes RSPH9 and RSPH4A cause primary ciliary dyskinesia with central-microtubular-pair abnormalities.</title>
        <authorList>
            <person name="Castleman V.H."/>
            <person name="Romio L."/>
            <person name="Chodhari R."/>
            <person name="Hirst R.A."/>
            <person name="de Castro S.C.P."/>
            <person name="Parker K.A."/>
            <person name="Ybot-Gonzalez P."/>
            <person name="Emes R.D."/>
            <person name="Wilson S.W."/>
            <person name="Wallis C."/>
            <person name="Johnson C.A."/>
            <person name="Herrera R.J."/>
            <person name="Rutman A."/>
            <person name="Dixon M."/>
            <person name="Shoemark A."/>
            <person name="Bush A."/>
            <person name="Hogg C."/>
            <person name="Gardiner R.M."/>
            <person name="Reish O."/>
            <person name="Greene N.D.E."/>
            <person name="O'Callaghan C."/>
            <person name="Purton S."/>
            <person name="Chung E.M.K."/>
            <person name="Mitchison H.M."/>
        </authorList>
    </citation>
    <scope>IDENTIFICATION</scope>
    <scope>FUNCTION</scope>
    <scope>VARIANT CILD12 LYS-268 DEL</scope>
</reference>
<reference key="6">
    <citation type="journal article" date="2023" name="Elife">
        <title>LRRC23 truncation impairs radial spoke 3 head assembly and sperm motility underlying male infertility.</title>
        <authorList>
            <person name="Hwang J.Y."/>
            <person name="Chai P."/>
            <person name="Nawaz S."/>
            <person name="Choi J."/>
            <person name="Lopez-Giraldez F."/>
            <person name="Hussain S."/>
            <person name="Bilguvar K."/>
            <person name="Mane S."/>
            <person name="Lifton R.P."/>
            <person name="Ahmad W."/>
            <person name="Zhang K."/>
            <person name="Chung J.J."/>
        </authorList>
    </citation>
    <scope>INTERACTION WITH LRRC23</scope>
</reference>
<name>RSPH9_HUMAN</name>
<feature type="chain" id="PRO_0000089561" description="Radial spoke head protein 9 homolog">
    <location>
        <begin position="1"/>
        <end position="276"/>
    </location>
</feature>
<feature type="splice variant" id="VSP_042934" description="In isoform 2." evidence="6">
    <location>
        <begin position="132"/>
        <end position="146"/>
    </location>
</feature>
<feature type="splice variant" id="VSP_042935" description="In isoform 2." evidence="6">
    <original>WSIQMERGNALVVLRSLLWPGLTFYHAPRTKNYGYVYVGTGEKNMDLPFML</original>
    <variation>EAVVQGDFTWLLSRCGFGWPCSWDSCSVSMRVLEHPDGEGQCPGGAAQPALAGPHLLPCSPHQELWLRLRGHWREEHGLALHAIEWEPAWMFLNRV</variation>
    <location>
        <begin position="226"/>
        <end position="276"/>
    </location>
</feature>
<feature type="sequence variant" id="VAR_050815" description="In dbSNP:rs16896629." evidence="3">
    <original>V</original>
    <variation>I</variation>
    <location>
        <position position="261"/>
    </location>
</feature>
<feature type="sequence variant" id="VAR_055236" description="In CILD12." evidence="4">
    <location>
        <position position="268"/>
    </location>
</feature>
<organism>
    <name type="scientific">Homo sapiens</name>
    <name type="common">Human</name>
    <dbReference type="NCBI Taxonomy" id="9606"/>
    <lineage>
        <taxon>Eukaryota</taxon>
        <taxon>Metazoa</taxon>
        <taxon>Chordata</taxon>
        <taxon>Craniata</taxon>
        <taxon>Vertebrata</taxon>
        <taxon>Euteleostomi</taxon>
        <taxon>Mammalia</taxon>
        <taxon>Eutheria</taxon>
        <taxon>Euarchontoglires</taxon>
        <taxon>Primates</taxon>
        <taxon>Haplorrhini</taxon>
        <taxon>Catarrhini</taxon>
        <taxon>Hominidae</taxon>
        <taxon>Homo</taxon>
    </lineage>
</organism>